<gene>
    <name type="primary">MAB21L1</name>
</gene>
<sequence length="359" mass="40956">MIAAQAKLVYHLNKYYNEKCQARKAAIAKTIREVCKVVSDVLKEVEVQEPRFISSLNEMDNRYEGLEVISPTEFEVVLYLNQMGVFNFVDDGSLPGCAVLKLSDGRKRSMSLWVEFITASGYLSARKIRSRFQTLVAQAVDKCSYRDVVKMVADTSEVKLRIRDRYVVQITPAFKCTGIWPRSAAHWPLPHIPWPGPNRVAEVKAEGFNLLSKECHSLAGKQSSAESDAWVLQFAEAENRLQMGGCRKKCLSILKTLRDRHLELPGQPLNNYHMKTLVSYECEKHPRESDWDESCLGDRLNGILLQLISCLQCRRCPHYFLPNLDLFQGKPHSALENAAKQTWRLAREILTNPKSLEKL</sequence>
<protein>
    <recommendedName>
        <fullName>Putative nucleotidyltransferase MAB21L1</fullName>
        <ecNumber evidence="4">2.7.7.-</ecNumber>
    </recommendedName>
    <alternativeName>
        <fullName>Protein mab-21-like 1</fullName>
    </alternativeName>
</protein>
<organism>
    <name type="scientific">Gallus gallus</name>
    <name type="common">Chicken</name>
    <dbReference type="NCBI Taxonomy" id="9031"/>
    <lineage>
        <taxon>Eukaryota</taxon>
        <taxon>Metazoa</taxon>
        <taxon>Chordata</taxon>
        <taxon>Craniata</taxon>
        <taxon>Vertebrata</taxon>
        <taxon>Euteleostomi</taxon>
        <taxon>Archelosauria</taxon>
        <taxon>Archosauria</taxon>
        <taxon>Dinosauria</taxon>
        <taxon>Saurischia</taxon>
        <taxon>Theropoda</taxon>
        <taxon>Coelurosauria</taxon>
        <taxon>Aves</taxon>
        <taxon>Neognathae</taxon>
        <taxon>Galloanserae</taxon>
        <taxon>Galliformes</taxon>
        <taxon>Phasianidae</taxon>
        <taxon>Phasianinae</taxon>
        <taxon>Gallus</taxon>
    </lineage>
</organism>
<evidence type="ECO:0000250" key="1">
    <source>
        <dbReference type="UniProtKB" id="O70299"/>
    </source>
</evidence>
<evidence type="ECO:0000250" key="2">
    <source>
        <dbReference type="UniProtKB" id="Q13394"/>
    </source>
</evidence>
<evidence type="ECO:0000250" key="3">
    <source>
        <dbReference type="UniProtKB" id="Q8N884"/>
    </source>
</evidence>
<evidence type="ECO:0000305" key="4"/>
<proteinExistence type="evidence at transcript level"/>
<dbReference type="EC" id="2.7.7.-" evidence="4"/>
<dbReference type="EMBL" id="AY049705">
    <property type="protein sequence ID" value="AAL17977.1"/>
    <property type="molecule type" value="mRNA"/>
</dbReference>
<dbReference type="RefSeq" id="NP_001383067.1">
    <property type="nucleotide sequence ID" value="NM_001396138.1"/>
</dbReference>
<dbReference type="RefSeq" id="NP_989864.1">
    <property type="nucleotide sequence ID" value="NM_204533.1"/>
</dbReference>
<dbReference type="SMR" id="Q8AY65"/>
<dbReference type="FunCoup" id="Q8AY65">
    <property type="interactions" value="8"/>
</dbReference>
<dbReference type="STRING" id="9031.ENSGALP00000059018"/>
<dbReference type="PaxDb" id="9031-ENSGALP00000027507"/>
<dbReference type="Ensembl" id="ENSGALT00010017142.1">
    <property type="protein sequence ID" value="ENSGALP00010009550.1"/>
    <property type="gene ID" value="ENSGALG00010007188.1"/>
</dbReference>
<dbReference type="GeneID" id="395208"/>
<dbReference type="KEGG" id="gga:395208"/>
<dbReference type="VEuPathDB" id="HostDB:geneid_395208"/>
<dbReference type="eggNOG" id="KOG3963">
    <property type="taxonomic scope" value="Eukaryota"/>
</dbReference>
<dbReference type="GeneTree" id="ENSGT01050000244827"/>
<dbReference type="HOGENOM" id="CLU_045315_0_0_1"/>
<dbReference type="InParanoid" id="Q8AY65"/>
<dbReference type="OMA" id="RESIYMK"/>
<dbReference type="OrthoDB" id="5961151at2759"/>
<dbReference type="PhylomeDB" id="Q8AY65"/>
<dbReference type="PRO" id="PR:Q8AY65"/>
<dbReference type="Proteomes" id="UP000000539">
    <property type="component" value="Chromosome 1"/>
</dbReference>
<dbReference type="Bgee" id="ENSGALG00000045052">
    <property type="expression patterns" value="Expressed in cerebellum and 2 other cell types or tissues"/>
</dbReference>
<dbReference type="GO" id="GO:0005634">
    <property type="term" value="C:nucleus"/>
    <property type="evidence" value="ECO:0007669"/>
    <property type="project" value="UniProtKB-SubCell"/>
</dbReference>
<dbReference type="GO" id="GO:0046872">
    <property type="term" value="F:metal ion binding"/>
    <property type="evidence" value="ECO:0007669"/>
    <property type="project" value="UniProtKB-KW"/>
</dbReference>
<dbReference type="GO" id="GO:0000166">
    <property type="term" value="F:nucleotide binding"/>
    <property type="evidence" value="ECO:0007669"/>
    <property type="project" value="UniProtKB-KW"/>
</dbReference>
<dbReference type="GO" id="GO:0016779">
    <property type="term" value="F:nucleotidyltransferase activity"/>
    <property type="evidence" value="ECO:0007669"/>
    <property type="project" value="UniProtKB-KW"/>
</dbReference>
<dbReference type="GO" id="GO:0043010">
    <property type="term" value="P:camera-type eye development"/>
    <property type="evidence" value="ECO:0007669"/>
    <property type="project" value="Ensembl"/>
</dbReference>
<dbReference type="GO" id="GO:0008283">
    <property type="term" value="P:cell population proliferation"/>
    <property type="evidence" value="ECO:0007669"/>
    <property type="project" value="Ensembl"/>
</dbReference>
<dbReference type="GO" id="GO:0008284">
    <property type="term" value="P:positive regulation of cell population proliferation"/>
    <property type="evidence" value="ECO:0007669"/>
    <property type="project" value="Ensembl"/>
</dbReference>
<dbReference type="FunFam" id="1.10.1410.40:FF:000002">
    <property type="entry name" value="protein mab-21-like 1"/>
    <property type="match status" value="1"/>
</dbReference>
<dbReference type="FunFam" id="3.30.460.90:FF:000001">
    <property type="entry name" value="protein mab-21-like 2"/>
    <property type="match status" value="1"/>
</dbReference>
<dbReference type="Gene3D" id="1.10.1410.40">
    <property type="match status" value="1"/>
</dbReference>
<dbReference type="Gene3D" id="3.30.460.90">
    <property type="match status" value="1"/>
</dbReference>
<dbReference type="InterPro" id="IPR046903">
    <property type="entry name" value="Mab-21-like_nuc_Trfase"/>
</dbReference>
<dbReference type="InterPro" id="IPR046906">
    <property type="entry name" value="Mab-21_HhH/H2TH-like"/>
</dbReference>
<dbReference type="InterPro" id="IPR024810">
    <property type="entry name" value="MAB21L/cGLR"/>
</dbReference>
<dbReference type="PANTHER" id="PTHR10656">
    <property type="entry name" value="CELL FATE DETERMINING PROTEIN MAB21-RELATED"/>
    <property type="match status" value="1"/>
</dbReference>
<dbReference type="PANTHER" id="PTHR10656:SF38">
    <property type="entry name" value="NUCLEOTIDYLTRANSFERASE MAB21L1-RELATED"/>
    <property type="match status" value="1"/>
</dbReference>
<dbReference type="Pfam" id="PF03281">
    <property type="entry name" value="Mab-21"/>
    <property type="match status" value="1"/>
</dbReference>
<dbReference type="Pfam" id="PF20266">
    <property type="entry name" value="Mab-21_C"/>
    <property type="match status" value="1"/>
</dbReference>
<dbReference type="SMART" id="SM01265">
    <property type="entry name" value="Mab-21"/>
    <property type="match status" value="1"/>
</dbReference>
<name>MB211_CHICK</name>
<comment type="function">
    <text evidence="1 2">Putative nucleotidyltransferase required for several aspects of embryonic development including normal development of the eye (By similarity). It is unclear whether it displays nucleotidyltransferase activity in vivo. Binds single-stranded RNA (ssRNA) (By similarity).</text>
</comment>
<comment type="subunit">
    <text evidence="2">Monomer. Homodecamer; composed of 2 back to back homopentamers. The protein may exist as monomer in solution and oiligomerizes upon ligand binding.</text>
</comment>
<comment type="subcellular location">
    <subcellularLocation>
        <location evidence="1">Nucleus</location>
    </subcellularLocation>
</comment>
<comment type="similarity">
    <text evidence="4">Belongs to the mab-21 family.</text>
</comment>
<feature type="chain" id="PRO_0000312783" description="Putative nucleotidyltransferase MAB21L1">
    <location>
        <begin position="1"/>
        <end position="359"/>
    </location>
</feature>
<feature type="binding site" evidence="2">
    <location>
        <begin position="23"/>
        <end position="24"/>
    </location>
    <ligand>
        <name>a ribonucleoside 5'-triphosphate</name>
        <dbReference type="ChEBI" id="CHEBI:61557"/>
    </ligand>
</feature>
<feature type="binding site" evidence="2">
    <location>
        <begin position="63"/>
        <end position="66"/>
    </location>
    <ligand>
        <name>a ribonucleoside 5'-triphosphate</name>
        <dbReference type="ChEBI" id="CHEBI:61557"/>
    </ligand>
</feature>
<feature type="binding site" evidence="3">
    <location>
        <position position="73"/>
    </location>
    <ligand>
        <name>Mg(2+)</name>
        <dbReference type="ChEBI" id="CHEBI:18420"/>
        <note>catalytic</note>
    </ligand>
</feature>
<feature type="binding site" evidence="3">
    <location>
        <position position="75"/>
    </location>
    <ligand>
        <name>Mg(2+)</name>
        <dbReference type="ChEBI" id="CHEBI:18420"/>
        <note>catalytic</note>
    </ligand>
</feature>
<feature type="binding site" evidence="2">
    <location>
        <position position="248"/>
    </location>
    <ligand>
        <name>a ribonucleoside 5'-triphosphate</name>
        <dbReference type="ChEBI" id="CHEBI:61557"/>
    </ligand>
</feature>
<feature type="binding site" evidence="2">
    <location>
        <begin position="252"/>
        <end position="255"/>
    </location>
    <ligand>
        <name>a ribonucleoside 5'-triphosphate</name>
        <dbReference type="ChEBI" id="CHEBI:61557"/>
    </ligand>
</feature>
<reference key="1">
    <citation type="submission" date="2001-08" db="EMBL/GenBank/DDBJ databases">
        <title>Developmental expression of chicken MAB21 genes.</title>
        <authorList>
            <person name="Wong R.L.Y."/>
            <person name="Chow K.L."/>
        </authorList>
    </citation>
    <scope>NUCLEOTIDE SEQUENCE [MRNA]</scope>
</reference>
<accession>Q8AY65</accession>
<keyword id="KW-0217">Developmental protein</keyword>
<keyword id="KW-0460">Magnesium</keyword>
<keyword id="KW-0479">Metal-binding</keyword>
<keyword id="KW-0547">Nucleotide-binding</keyword>
<keyword id="KW-0548">Nucleotidyltransferase</keyword>
<keyword id="KW-0539">Nucleus</keyword>
<keyword id="KW-1185">Reference proteome</keyword>
<keyword id="KW-0808">Transferase</keyword>